<organism>
    <name type="scientific">Gallid herpesvirus 2 (strain Chicken/Md5/ATCC VR-987)</name>
    <name type="common">GaHV-2</name>
    <name type="synonym">Marek's disease herpesvirus type 1</name>
    <dbReference type="NCBI Taxonomy" id="10389"/>
    <lineage>
        <taxon>Viruses</taxon>
        <taxon>Duplodnaviria</taxon>
        <taxon>Heunggongvirae</taxon>
        <taxon>Peploviricota</taxon>
        <taxon>Herviviricetes</taxon>
        <taxon>Herpesvirales</taxon>
        <taxon>Orthoherpesviridae</taxon>
        <taxon>Alphaherpesvirinae</taxon>
        <taxon>Mardivirus</taxon>
        <taxon>Mardivirus gallidalpha2</taxon>
        <taxon>Gallid alphaherpesvirus 2</taxon>
    </lineage>
</organism>
<accession>Q9E6R4</accession>
<protein>
    <recommendedName>
        <fullName>Uncharacterized gene 11 protein</fullName>
    </recommendedName>
</protein>
<keyword id="KW-1043">Host membrane</keyword>
<keyword id="KW-0472">Membrane</keyword>
<keyword id="KW-1185">Reference proteome</keyword>
<keyword id="KW-0812">Transmembrane</keyword>
<keyword id="KW-1133">Transmembrane helix</keyword>
<comment type="subcellular location">
    <subcellularLocation>
        <location evidence="2">Host membrane</location>
        <topology evidence="2">Single-pass membrane protein</topology>
    </subcellularLocation>
</comment>
<organismHost>
    <name type="scientific">Gallus gallus</name>
    <name type="common">Chicken</name>
    <dbReference type="NCBI Taxonomy" id="9031"/>
</organismHost>
<proteinExistence type="predicted"/>
<feature type="chain" id="PRO_0000406593" description="Uncharacterized gene 11 protein">
    <location>
        <begin position="1"/>
        <end position="85"/>
    </location>
</feature>
<feature type="transmembrane region" description="Helical" evidence="1">
    <location>
        <begin position="39"/>
        <end position="59"/>
    </location>
</feature>
<dbReference type="EMBL" id="AF243438">
    <property type="protein sequence ID" value="AAG14191.1"/>
    <property type="molecule type" value="Genomic_DNA"/>
</dbReference>
<dbReference type="Proteomes" id="UP000008072">
    <property type="component" value="Segment"/>
</dbReference>
<dbReference type="GO" id="GO:0033644">
    <property type="term" value="C:host cell membrane"/>
    <property type="evidence" value="ECO:0007669"/>
    <property type="project" value="UniProtKB-SubCell"/>
</dbReference>
<dbReference type="GO" id="GO:0016020">
    <property type="term" value="C:membrane"/>
    <property type="evidence" value="ECO:0007669"/>
    <property type="project" value="UniProtKB-KW"/>
</dbReference>
<sequence>MTSERALTLAPGKVSTADIYEADFSFRREFVRQILQREFILFEISMYIIFIVTFCYKIILFLFRIIPKDLDHRQRNRGRKMSASA</sequence>
<reference key="1">
    <citation type="journal article" date="2000" name="J. Virol.">
        <title>The genome of a very virulent Marek's disease virus.</title>
        <authorList>
            <person name="Tulman E.R."/>
            <person name="Afonso C.L."/>
            <person name="Lu Z."/>
            <person name="Zsak L."/>
            <person name="Rock D.L."/>
            <person name="Kutish G.F."/>
        </authorList>
    </citation>
    <scope>NUCLEOTIDE SEQUENCE [LARGE SCALE GENOMIC DNA]</scope>
</reference>
<gene>
    <name type="primary">MDV011</name>
</gene>
<name>VG11_GAHVM</name>
<evidence type="ECO:0000255" key="1"/>
<evidence type="ECO:0000305" key="2"/>